<reference key="1">
    <citation type="journal article" date="1996" name="Science">
        <title>Complete genome sequence of the methanogenic archaeon, Methanococcus jannaschii.</title>
        <authorList>
            <person name="Bult C.J."/>
            <person name="White O."/>
            <person name="Olsen G.J."/>
            <person name="Zhou L."/>
            <person name="Fleischmann R.D."/>
            <person name="Sutton G.G."/>
            <person name="Blake J.A."/>
            <person name="FitzGerald L.M."/>
            <person name="Clayton R.A."/>
            <person name="Gocayne J.D."/>
            <person name="Kerlavage A.R."/>
            <person name="Dougherty B.A."/>
            <person name="Tomb J.-F."/>
            <person name="Adams M.D."/>
            <person name="Reich C.I."/>
            <person name="Overbeek R."/>
            <person name="Kirkness E.F."/>
            <person name="Weinstock K.G."/>
            <person name="Merrick J.M."/>
            <person name="Glodek A."/>
            <person name="Scott J.L."/>
            <person name="Geoghagen N.S.M."/>
            <person name="Weidman J.F."/>
            <person name="Fuhrmann J.L."/>
            <person name="Nguyen D."/>
            <person name="Utterback T.R."/>
            <person name="Kelley J.M."/>
            <person name="Peterson J.D."/>
            <person name="Sadow P.W."/>
            <person name="Hanna M.C."/>
            <person name="Cotton M.D."/>
            <person name="Roberts K.M."/>
            <person name="Hurst M.A."/>
            <person name="Kaine B.P."/>
            <person name="Borodovsky M."/>
            <person name="Klenk H.-P."/>
            <person name="Fraser C.M."/>
            <person name="Smith H.O."/>
            <person name="Woese C.R."/>
            <person name="Venter J.C."/>
        </authorList>
    </citation>
    <scope>NUCLEOTIDE SEQUENCE [LARGE SCALE GENOMIC DNA]</scope>
    <source>
        <strain>ATCC 43067 / DSM 2661 / JAL-1 / JCM 10045 / NBRC 100440</strain>
    </source>
</reference>
<gene>
    <name type="ordered locus">MJ0063</name>
</gene>
<protein>
    <recommendedName>
        <fullName>Uncharacterized protein MJ0063</fullName>
    </recommendedName>
</protein>
<name>Y063_METJA</name>
<proteinExistence type="predicted"/>
<accession>Q60375</accession>
<dbReference type="EMBL" id="L77117">
    <property type="protein sequence ID" value="AAB98050.1"/>
    <property type="molecule type" value="Genomic_DNA"/>
</dbReference>
<dbReference type="PIR" id="G64307">
    <property type="entry name" value="G64307"/>
</dbReference>
<dbReference type="SMR" id="Q60375"/>
<dbReference type="STRING" id="243232.MJ_0063"/>
<dbReference type="PaxDb" id="243232-MJ_0063"/>
<dbReference type="EnsemblBacteria" id="AAB98050">
    <property type="protein sequence ID" value="AAB98050"/>
    <property type="gene ID" value="MJ_0063"/>
</dbReference>
<dbReference type="KEGG" id="mja:MJ_0063"/>
<dbReference type="eggNOG" id="arCOG08289">
    <property type="taxonomic scope" value="Archaea"/>
</dbReference>
<dbReference type="HOGENOM" id="CLU_124805_0_0_2"/>
<dbReference type="InParanoid" id="Q60375"/>
<dbReference type="OrthoDB" id="375293at2157"/>
<dbReference type="Proteomes" id="UP000000805">
    <property type="component" value="Chromosome"/>
</dbReference>
<organism>
    <name type="scientific">Methanocaldococcus jannaschii (strain ATCC 43067 / DSM 2661 / JAL-1 / JCM 10045 / NBRC 100440)</name>
    <name type="common">Methanococcus jannaschii</name>
    <dbReference type="NCBI Taxonomy" id="243232"/>
    <lineage>
        <taxon>Archaea</taxon>
        <taxon>Methanobacteriati</taxon>
        <taxon>Methanobacteriota</taxon>
        <taxon>Methanomada group</taxon>
        <taxon>Methanococci</taxon>
        <taxon>Methanococcales</taxon>
        <taxon>Methanocaldococcaceae</taxon>
        <taxon>Methanocaldococcus</taxon>
    </lineage>
</organism>
<sequence>MFQMENRNDELFIKLDSSIKSLLRSAREFKKENESISNVLLQLAEMLDNIDKTLEIIEKNFQIILKNRESGKFSNNEIIQKFVKPLENLIKVIENIESTSNNLKNEIENCASSIPTLKEITDKLKIINMESATQAIEEFKIAYDMLEDNRKNLDELIEKTKILKDKLKNLLLQIDNFLNEH</sequence>
<feature type="chain" id="PRO_0000106674" description="Uncharacterized protein MJ0063">
    <location>
        <begin position="1"/>
        <end position="181"/>
    </location>
</feature>
<keyword id="KW-1185">Reference proteome</keyword>